<evidence type="ECO:0000255" key="1">
    <source>
        <dbReference type="HAMAP-Rule" id="MF_01197"/>
    </source>
</evidence>
<evidence type="ECO:0000256" key="2">
    <source>
        <dbReference type="SAM" id="MobiDB-lite"/>
    </source>
</evidence>
<evidence type="ECO:0000305" key="3"/>
<comment type="function">
    <text evidence="1">Cell division protein that is part of the divisome complex and is recruited early to the Z-ring. Probably stimulates Z-ring formation, perhaps through the cross-linking of FtsZ protofilaments. Its function overlaps with FtsA.</text>
</comment>
<comment type="subunit">
    <text evidence="1">Homodimer. Interacts with FtsZ.</text>
</comment>
<comment type="subcellular location">
    <subcellularLocation>
        <location evidence="1">Cytoplasm</location>
    </subcellularLocation>
    <text evidence="1">Localizes to the division site, in a FtsZ-dependent manner.</text>
</comment>
<comment type="similarity">
    <text evidence="1">Belongs to the SepF family.</text>
</comment>
<comment type="sequence caution" evidence="3">
    <conflict type="erroneous initiation">
        <sequence resource="EMBL-CDS" id="AAZ55154"/>
    </conflict>
</comment>
<dbReference type="EMBL" id="CP000088">
    <property type="protein sequence ID" value="AAZ55154.1"/>
    <property type="status" value="ALT_INIT"/>
    <property type="molecule type" value="Genomic_DNA"/>
</dbReference>
<dbReference type="RefSeq" id="WP_038043538.1">
    <property type="nucleotide sequence ID" value="NC_007333.1"/>
</dbReference>
<dbReference type="SMR" id="Q47QW3"/>
<dbReference type="STRING" id="269800.Tfu_1116"/>
<dbReference type="KEGG" id="tfu:Tfu_1116"/>
<dbReference type="eggNOG" id="COG1799">
    <property type="taxonomic scope" value="Bacteria"/>
</dbReference>
<dbReference type="HOGENOM" id="CLU_078499_0_0_11"/>
<dbReference type="OrthoDB" id="3731101at2"/>
<dbReference type="GO" id="GO:0005737">
    <property type="term" value="C:cytoplasm"/>
    <property type="evidence" value="ECO:0007669"/>
    <property type="project" value="UniProtKB-SubCell"/>
</dbReference>
<dbReference type="GO" id="GO:0000917">
    <property type="term" value="P:division septum assembly"/>
    <property type="evidence" value="ECO:0007669"/>
    <property type="project" value="UniProtKB-KW"/>
</dbReference>
<dbReference type="GO" id="GO:0043093">
    <property type="term" value="P:FtsZ-dependent cytokinesis"/>
    <property type="evidence" value="ECO:0007669"/>
    <property type="project" value="UniProtKB-UniRule"/>
</dbReference>
<dbReference type="Gene3D" id="3.30.110.150">
    <property type="entry name" value="SepF-like protein"/>
    <property type="match status" value="1"/>
</dbReference>
<dbReference type="HAMAP" id="MF_01197">
    <property type="entry name" value="SepF"/>
    <property type="match status" value="1"/>
</dbReference>
<dbReference type="InterPro" id="IPR023052">
    <property type="entry name" value="Cell_div_SepF"/>
</dbReference>
<dbReference type="InterPro" id="IPR007561">
    <property type="entry name" value="Cell_div_SepF/SepF-rel"/>
</dbReference>
<dbReference type="InterPro" id="IPR038594">
    <property type="entry name" value="SepF-like_sf"/>
</dbReference>
<dbReference type="PANTHER" id="PTHR35798">
    <property type="entry name" value="CELL DIVISION PROTEIN SEPF"/>
    <property type="match status" value="1"/>
</dbReference>
<dbReference type="PANTHER" id="PTHR35798:SF1">
    <property type="entry name" value="CELL DIVISION PROTEIN SEPF"/>
    <property type="match status" value="1"/>
</dbReference>
<dbReference type="Pfam" id="PF04472">
    <property type="entry name" value="SepF"/>
    <property type="match status" value="1"/>
</dbReference>
<name>SEPF_THEFY</name>
<protein>
    <recommendedName>
        <fullName evidence="1">Cell division protein SepF</fullName>
    </recommendedName>
</protein>
<gene>
    <name evidence="1" type="primary">sepF</name>
    <name type="ordered locus">Tfu_1116</name>
</gene>
<keyword id="KW-0131">Cell cycle</keyword>
<keyword id="KW-0132">Cell division</keyword>
<keyword id="KW-0963">Cytoplasm</keyword>
<keyword id="KW-0717">Septation</keyword>
<sequence length="173" mass="19540">MAGALRKMAVYLGLVEDDRYDHRYADEYDDFEDFDEPLDERPSRNRSPRDDSRNNAVTDSSDHSPSRNERRSPAPAPATADLARITTLHPRTYNEARTIGEHFREGIPVIMNLTEMVDSDAKRLVDFAAGLIFGLHGSIERVTNKVFLLSPANVEVTAEDKARIAERGFFNQS</sequence>
<reference key="1">
    <citation type="journal article" date="2007" name="J. Bacteriol.">
        <title>Genome sequence and analysis of the soil cellulolytic actinomycete Thermobifida fusca YX.</title>
        <authorList>
            <person name="Lykidis A."/>
            <person name="Mavromatis K."/>
            <person name="Ivanova N."/>
            <person name="Anderson I."/>
            <person name="Land M."/>
            <person name="DiBartolo G."/>
            <person name="Martinez M."/>
            <person name="Lapidus A."/>
            <person name="Lucas S."/>
            <person name="Copeland A."/>
            <person name="Richardson P."/>
            <person name="Wilson D.B."/>
            <person name="Kyrpides N."/>
        </authorList>
    </citation>
    <scope>NUCLEOTIDE SEQUENCE [LARGE SCALE GENOMIC DNA]</scope>
    <source>
        <strain>YX</strain>
    </source>
</reference>
<proteinExistence type="inferred from homology"/>
<organism>
    <name type="scientific">Thermobifida fusca (strain YX)</name>
    <dbReference type="NCBI Taxonomy" id="269800"/>
    <lineage>
        <taxon>Bacteria</taxon>
        <taxon>Bacillati</taxon>
        <taxon>Actinomycetota</taxon>
        <taxon>Actinomycetes</taxon>
        <taxon>Streptosporangiales</taxon>
        <taxon>Nocardiopsidaceae</taxon>
        <taxon>Thermobifida</taxon>
    </lineage>
</organism>
<accession>Q47QW3</accession>
<feature type="chain" id="PRO_0000334134" description="Cell division protein SepF">
    <location>
        <begin position="1"/>
        <end position="173"/>
    </location>
</feature>
<feature type="region of interest" description="Disordered" evidence="2">
    <location>
        <begin position="31"/>
        <end position="82"/>
    </location>
</feature>
<feature type="compositionally biased region" description="Basic and acidic residues" evidence="2">
    <location>
        <begin position="39"/>
        <end position="53"/>
    </location>
</feature>
<feature type="compositionally biased region" description="Basic and acidic residues" evidence="2">
    <location>
        <begin position="60"/>
        <end position="72"/>
    </location>
</feature>